<dbReference type="EC" id="2.5.1.147" evidence="1"/>
<dbReference type="EMBL" id="AE010299">
    <property type="protein sequence ID" value="AAM04903.1"/>
    <property type="status" value="ALT_INIT"/>
    <property type="molecule type" value="Genomic_DNA"/>
</dbReference>
<dbReference type="RefSeq" id="WP_011021503.1">
    <property type="nucleotide sequence ID" value="NC_003552.1"/>
</dbReference>
<dbReference type="SMR" id="Q8TQQ1"/>
<dbReference type="FunCoup" id="Q8TQQ1">
    <property type="interactions" value="93"/>
</dbReference>
<dbReference type="STRING" id="188937.MA_1489"/>
<dbReference type="EnsemblBacteria" id="AAM04903">
    <property type="protein sequence ID" value="AAM04903"/>
    <property type="gene ID" value="MA_1489"/>
</dbReference>
<dbReference type="GeneID" id="1473377"/>
<dbReference type="KEGG" id="mac:MA_1489"/>
<dbReference type="HOGENOM" id="CLU_040406_1_0_2"/>
<dbReference type="InParanoid" id="Q8TQQ1"/>
<dbReference type="OrthoDB" id="8186at2157"/>
<dbReference type="PhylomeDB" id="Q8TQQ1"/>
<dbReference type="UniPathway" id="UPA00072"/>
<dbReference type="Proteomes" id="UP000002487">
    <property type="component" value="Chromosome"/>
</dbReference>
<dbReference type="GO" id="GO:0051539">
    <property type="term" value="F:4 iron, 4 sulfur cluster binding"/>
    <property type="evidence" value="ECO:0007669"/>
    <property type="project" value="UniProtKB-KW"/>
</dbReference>
<dbReference type="GO" id="GO:0141093">
    <property type="term" value="F:5-amino-6-(D-ribitylamino)uracil--L-tyrosine 4-hydroxyphenyl transferase activity"/>
    <property type="evidence" value="ECO:0007669"/>
    <property type="project" value="UniProtKB-EC"/>
</dbReference>
<dbReference type="GO" id="GO:0044689">
    <property type="term" value="F:7,8-didemethyl-8-hydroxy-5-deazariboflavin synthase activity"/>
    <property type="evidence" value="ECO:0000318"/>
    <property type="project" value="GO_Central"/>
</dbReference>
<dbReference type="GO" id="GO:0005506">
    <property type="term" value="F:iron ion binding"/>
    <property type="evidence" value="ECO:0007669"/>
    <property type="project" value="UniProtKB-UniRule"/>
</dbReference>
<dbReference type="GO" id="GO:0004222">
    <property type="term" value="F:metalloendopeptidase activity"/>
    <property type="evidence" value="ECO:0007669"/>
    <property type="project" value="InterPro"/>
</dbReference>
<dbReference type="GO" id="GO:0008270">
    <property type="term" value="F:zinc ion binding"/>
    <property type="evidence" value="ECO:0007669"/>
    <property type="project" value="InterPro"/>
</dbReference>
<dbReference type="CDD" id="cd01335">
    <property type="entry name" value="Radical_SAM"/>
    <property type="match status" value="1"/>
</dbReference>
<dbReference type="Gene3D" id="3.20.20.70">
    <property type="entry name" value="Aldolase class I"/>
    <property type="match status" value="1"/>
</dbReference>
<dbReference type="HAMAP" id="MF_01612">
    <property type="entry name" value="FO_synth_sub2"/>
    <property type="match status" value="1"/>
</dbReference>
<dbReference type="InterPro" id="IPR013785">
    <property type="entry name" value="Aldolase_TIM"/>
</dbReference>
<dbReference type="InterPro" id="IPR045567">
    <property type="entry name" value="CofH/MnqC-like_C"/>
</dbReference>
<dbReference type="InterPro" id="IPR019940">
    <property type="entry name" value="CofH_family"/>
</dbReference>
<dbReference type="InterPro" id="IPR006638">
    <property type="entry name" value="Elp3/MiaA/NifB-like_rSAM"/>
</dbReference>
<dbReference type="InterPro" id="IPR034405">
    <property type="entry name" value="F420"/>
</dbReference>
<dbReference type="InterPro" id="IPR020050">
    <property type="entry name" value="FO_synthase_su2"/>
</dbReference>
<dbReference type="InterPro" id="IPR012314">
    <property type="entry name" value="Pept_M12B_GON-ADAMTSs"/>
</dbReference>
<dbReference type="InterPro" id="IPR007197">
    <property type="entry name" value="rSAM"/>
</dbReference>
<dbReference type="NCBIfam" id="TIGR00423">
    <property type="entry name" value="CofH family radical SAM protein"/>
    <property type="match status" value="1"/>
</dbReference>
<dbReference type="NCBIfam" id="TIGR03551">
    <property type="entry name" value="F420_cofH"/>
    <property type="match status" value="1"/>
</dbReference>
<dbReference type="NCBIfam" id="NF005609">
    <property type="entry name" value="PRK07360.1"/>
    <property type="match status" value="1"/>
</dbReference>
<dbReference type="PANTHER" id="PTHR43076">
    <property type="entry name" value="FO SYNTHASE (COFH)"/>
    <property type="match status" value="1"/>
</dbReference>
<dbReference type="PANTHER" id="PTHR43076:SF1">
    <property type="entry name" value="LIPOYL SYNTHASE 2"/>
    <property type="match status" value="1"/>
</dbReference>
<dbReference type="Pfam" id="PF19288">
    <property type="entry name" value="CofH_C"/>
    <property type="match status" value="1"/>
</dbReference>
<dbReference type="Pfam" id="PF04055">
    <property type="entry name" value="Radical_SAM"/>
    <property type="match status" value="1"/>
</dbReference>
<dbReference type="PIRSF" id="PIRSF004762">
    <property type="entry name" value="CHP00423"/>
    <property type="match status" value="1"/>
</dbReference>
<dbReference type="SFLD" id="SFLDF00293">
    <property type="entry name" value="((2_3_4_5-tetrahydroxypentyl)a"/>
    <property type="match status" value="1"/>
</dbReference>
<dbReference type="SFLD" id="SFLDG01388">
    <property type="entry name" value="7_8-didemethyl-8-hydroxy-5-dea"/>
    <property type="match status" value="1"/>
</dbReference>
<dbReference type="SFLD" id="SFLDF00343">
    <property type="entry name" value="aminofutalosine_synthase_(mqnE"/>
    <property type="match status" value="1"/>
</dbReference>
<dbReference type="SMART" id="SM00729">
    <property type="entry name" value="Elp3"/>
    <property type="match status" value="1"/>
</dbReference>
<dbReference type="SUPFAM" id="SSF102114">
    <property type="entry name" value="Radical SAM enzymes"/>
    <property type="match status" value="1"/>
</dbReference>
<dbReference type="PROSITE" id="PS51046">
    <property type="entry name" value="GON"/>
    <property type="match status" value="1"/>
</dbReference>
<dbReference type="PROSITE" id="PS51918">
    <property type="entry name" value="RADICAL_SAM"/>
    <property type="match status" value="1"/>
</dbReference>
<gene>
    <name evidence="1" type="primary">cofH2</name>
    <name type="ordered locus">MA_1489</name>
</gene>
<reference key="1">
    <citation type="journal article" date="2002" name="Genome Res.">
        <title>The genome of Methanosarcina acetivorans reveals extensive metabolic and physiological diversity.</title>
        <authorList>
            <person name="Galagan J.E."/>
            <person name="Nusbaum C."/>
            <person name="Roy A."/>
            <person name="Endrizzi M.G."/>
            <person name="Macdonald P."/>
            <person name="FitzHugh W."/>
            <person name="Calvo S."/>
            <person name="Engels R."/>
            <person name="Smirnov S."/>
            <person name="Atnoor D."/>
            <person name="Brown A."/>
            <person name="Allen N."/>
            <person name="Naylor J."/>
            <person name="Stange-Thomann N."/>
            <person name="DeArellano K."/>
            <person name="Johnson R."/>
            <person name="Linton L."/>
            <person name="McEwan P."/>
            <person name="McKernan K."/>
            <person name="Talamas J."/>
            <person name="Tirrell A."/>
            <person name="Ye W."/>
            <person name="Zimmer A."/>
            <person name="Barber R.D."/>
            <person name="Cann I."/>
            <person name="Graham D.E."/>
            <person name="Grahame D.A."/>
            <person name="Guss A.M."/>
            <person name="Hedderich R."/>
            <person name="Ingram-Smith C."/>
            <person name="Kuettner H.C."/>
            <person name="Krzycki J.A."/>
            <person name="Leigh J.A."/>
            <person name="Li W."/>
            <person name="Liu J."/>
            <person name="Mukhopadhyay B."/>
            <person name="Reeve J.N."/>
            <person name="Smith K."/>
            <person name="Springer T.A."/>
            <person name="Umayam L.A."/>
            <person name="White O."/>
            <person name="White R.H."/>
            <person name="de Macario E.C."/>
            <person name="Ferry J.G."/>
            <person name="Jarrell K.F."/>
            <person name="Jing H."/>
            <person name="Macario A.J.L."/>
            <person name="Paulsen I.T."/>
            <person name="Pritchett M."/>
            <person name="Sowers K.R."/>
            <person name="Swanson R.V."/>
            <person name="Zinder S.H."/>
            <person name="Lander E."/>
            <person name="Metcalf W.W."/>
            <person name="Birren B."/>
        </authorList>
    </citation>
    <scope>NUCLEOTIDE SEQUENCE [LARGE SCALE GENOMIC DNA]</scope>
    <source>
        <strain>ATCC 35395 / DSM 2834 / JCM 12185 / C2A</strain>
    </source>
</reference>
<proteinExistence type="inferred from homology"/>
<sequence>MYMKKPAIPDDVIERVQQGKCTKEDALLLLEGNPFELFELANKLRASTVGDVVSYVVNRNIYITNKCVGTCGFCAYRTDEGYILSIEEILKQTEEAREAGAVEVCVQGGYTPEADMEFYLEIIEAIKSGFPDICIHALSPMEVNYAAGLSGMSVEDALRKLKKCGLDSLTGTSAEILSDRVRKIICPGKITTQQWVDTVTAAHRAGISTNSTIMYGHVETLEERLDHVFTIREIQKETGGISELIPMSFLPYNNPIGEKMMASGKFTSTGLEDLQLIAISRIILHTHVNNIQATWVKLGKKLAQFALQCGANDLGGTLMEDQISTASGGSYGEYVSPAEFEWMIKGAGRVPIQRDTLYRKVEPRLPASEGLLPGYVKPKMGSKE</sequence>
<organism>
    <name type="scientific">Methanosarcina acetivorans (strain ATCC 35395 / DSM 2834 / JCM 12185 / C2A)</name>
    <dbReference type="NCBI Taxonomy" id="188937"/>
    <lineage>
        <taxon>Archaea</taxon>
        <taxon>Methanobacteriati</taxon>
        <taxon>Methanobacteriota</taxon>
        <taxon>Stenosarchaea group</taxon>
        <taxon>Methanomicrobia</taxon>
        <taxon>Methanosarcinales</taxon>
        <taxon>Methanosarcinaceae</taxon>
        <taxon>Methanosarcina</taxon>
    </lineage>
</organism>
<comment type="function">
    <text evidence="1">Catalyzes the radical-mediated synthesis of 5-amino-5-(4-hydroxybenzyl)-6-(D-ribitylimino)-5,6-dihydrouracil from 5-amino-6-(D-ribitylamino)uracil and L-tyrosine.</text>
</comment>
<comment type="catalytic activity">
    <reaction evidence="1">
        <text>5-amino-6-(D-ribitylamino)uracil + L-tyrosine + S-adenosyl-L-methionine = 5-amino-5-(4-hydroxybenzyl)-6-(D-ribitylimino)-5,6-dihydrouracil + 2-iminoacetate + 5'-deoxyadenosine + L-methionine + H(+)</text>
        <dbReference type="Rhea" id="RHEA:55200"/>
        <dbReference type="ChEBI" id="CHEBI:15378"/>
        <dbReference type="ChEBI" id="CHEBI:15934"/>
        <dbReference type="ChEBI" id="CHEBI:17319"/>
        <dbReference type="ChEBI" id="CHEBI:57844"/>
        <dbReference type="ChEBI" id="CHEBI:58315"/>
        <dbReference type="ChEBI" id="CHEBI:59789"/>
        <dbReference type="ChEBI" id="CHEBI:77846"/>
        <dbReference type="ChEBI" id="CHEBI:85936"/>
        <dbReference type="EC" id="2.5.1.147"/>
    </reaction>
</comment>
<comment type="cofactor">
    <cofactor evidence="1">
        <name>[4Fe-4S] cluster</name>
        <dbReference type="ChEBI" id="CHEBI:49883"/>
    </cofactor>
    <text evidence="1">Binds 1 [4Fe-4S] cluster. The cluster is coordinated with 3 cysteines and an exchangeable S-adenosyl-L-methionine.</text>
</comment>
<comment type="pathway">
    <text evidence="1">Cofactor biosynthesis; coenzyme F0 biosynthesis.</text>
</comment>
<comment type="subunit">
    <text evidence="1">Consists of two subunits, CofG and CofH.</text>
</comment>
<comment type="similarity">
    <text evidence="1">Belongs to the radical SAM superfamily. CofH family.</text>
</comment>
<comment type="sequence caution" evidence="3">
    <conflict type="erroneous initiation">
        <sequence resource="EMBL-CDS" id="AAM04903"/>
    </conflict>
</comment>
<keyword id="KW-0004">4Fe-4S</keyword>
<keyword id="KW-0408">Iron</keyword>
<keyword id="KW-0411">Iron-sulfur</keyword>
<keyword id="KW-0479">Metal-binding</keyword>
<keyword id="KW-1185">Reference proteome</keyword>
<keyword id="KW-0949">S-adenosyl-L-methionine</keyword>
<keyword id="KW-0808">Transferase</keyword>
<feature type="chain" id="PRO_0000141716" description="5-amino-6-(D-ribitylamino)uracil--L-tyrosine 4-hydroxyphenyl transferase 2">
    <location>
        <begin position="1"/>
        <end position="384"/>
    </location>
</feature>
<feature type="domain" description="Radical SAM core" evidence="2">
    <location>
        <begin position="53"/>
        <end position="286"/>
    </location>
</feature>
<feature type="binding site" evidence="1">
    <location>
        <position position="67"/>
    </location>
    <ligand>
        <name>[4Fe-4S] cluster</name>
        <dbReference type="ChEBI" id="CHEBI:49883"/>
        <note>4Fe-4S-S-AdoMet</note>
    </ligand>
</feature>
<feature type="binding site" evidence="1">
    <location>
        <position position="71"/>
    </location>
    <ligand>
        <name>[4Fe-4S] cluster</name>
        <dbReference type="ChEBI" id="CHEBI:49883"/>
        <note>4Fe-4S-S-AdoMet</note>
    </ligand>
</feature>
<feature type="binding site" evidence="1">
    <location>
        <position position="74"/>
    </location>
    <ligand>
        <name>[4Fe-4S] cluster</name>
        <dbReference type="ChEBI" id="CHEBI:49883"/>
        <note>4Fe-4S-S-AdoMet</note>
    </ligand>
</feature>
<protein>
    <recommendedName>
        <fullName evidence="1">5-amino-6-(D-ribitylamino)uracil--L-tyrosine 4-hydroxyphenyl transferase 2</fullName>
        <ecNumber evidence="1">2.5.1.147</ecNumber>
    </recommendedName>
    <alternativeName>
        <fullName evidence="1">FO synthase subunit 2 2</fullName>
    </alternativeName>
</protein>
<name>COFH2_METAC</name>
<evidence type="ECO:0000255" key="1">
    <source>
        <dbReference type="HAMAP-Rule" id="MF_01612"/>
    </source>
</evidence>
<evidence type="ECO:0000255" key="2">
    <source>
        <dbReference type="PROSITE-ProRule" id="PRU01266"/>
    </source>
</evidence>
<evidence type="ECO:0000305" key="3"/>
<accession>Q8TQQ1</accession>